<organism>
    <name type="scientific">Cyriopagopus hainanus</name>
    <name type="common">Chinese bird spider</name>
    <name type="synonym">Haplopelma hainanum</name>
    <dbReference type="NCBI Taxonomy" id="209901"/>
    <lineage>
        <taxon>Eukaryota</taxon>
        <taxon>Metazoa</taxon>
        <taxon>Ecdysozoa</taxon>
        <taxon>Arthropoda</taxon>
        <taxon>Chelicerata</taxon>
        <taxon>Arachnida</taxon>
        <taxon>Araneae</taxon>
        <taxon>Mygalomorphae</taxon>
        <taxon>Theraphosidae</taxon>
        <taxon>Haplopelma</taxon>
    </lineage>
</organism>
<dbReference type="EMBL" id="GU293024">
    <property type="protein sequence ID" value="ADB56840.1"/>
    <property type="molecule type" value="mRNA"/>
</dbReference>
<dbReference type="SMR" id="D2Y2E7"/>
<dbReference type="ArachnoServer" id="AS001980">
    <property type="toxin name" value="U8-theraphotoxin-Hhn1g"/>
</dbReference>
<dbReference type="GO" id="GO:0005576">
    <property type="term" value="C:extracellular region"/>
    <property type="evidence" value="ECO:0007669"/>
    <property type="project" value="UniProtKB-SubCell"/>
</dbReference>
<dbReference type="GO" id="GO:0090729">
    <property type="term" value="F:toxin activity"/>
    <property type="evidence" value="ECO:0007669"/>
    <property type="project" value="UniProtKB-KW"/>
</dbReference>
<dbReference type="Gene3D" id="2.10.80.10">
    <property type="entry name" value="Lipase, subunit A"/>
    <property type="match status" value="1"/>
</dbReference>
<dbReference type="InterPro" id="IPR023569">
    <property type="entry name" value="Prokineticin_domain"/>
</dbReference>
<dbReference type="Pfam" id="PF06607">
    <property type="entry name" value="Prokineticin"/>
    <property type="match status" value="1"/>
</dbReference>
<sequence length="84" mass="9309">MKVVLLVCLVWMMAMMELVSCECWSQADCSDGHCCAGSSFSENCRPYGGDGEQCEPRNKYEVYSTGCPCEENLMCSVINRCQSA</sequence>
<evidence type="ECO:0000250" key="1"/>
<evidence type="ECO:0000250" key="2">
    <source>
        <dbReference type="UniProtKB" id="Q9PW66"/>
    </source>
</evidence>
<evidence type="ECO:0000255" key="3"/>
<evidence type="ECO:0000305" key="4"/>
<evidence type="ECO:0000312" key="5">
    <source>
        <dbReference type="EMBL" id="ADB56840.1"/>
    </source>
</evidence>
<accession>D2Y2E7</accession>
<protein>
    <recommendedName>
        <fullName>U8-theraphotoxin-Hhn1g</fullName>
        <shortName>U8-TRTX-Hhn1g</shortName>
    </recommendedName>
    <alternativeName>
        <fullName evidence="5">Hainantoxin-XIV-8</fullName>
        <shortName evidence="5">HNTX-XIV-8</shortName>
    </alternativeName>
</protein>
<keyword id="KW-1015">Disulfide bond</keyword>
<keyword id="KW-0964">Secreted</keyword>
<keyword id="KW-0732">Signal</keyword>
<keyword id="KW-0800">Toxin</keyword>
<reference key="1">
    <citation type="journal article" date="2010" name="J. Proteome Res.">
        <title>Molecular diversification of peptide toxins from the tarantula Haplopelma hainanum (Ornithoctonus hainana) venom based on transcriptomic, peptidomic, and genomic analyses.</title>
        <authorList>
            <person name="Tang X."/>
            <person name="Zhang Y."/>
            <person name="Hu W."/>
            <person name="Xu D."/>
            <person name="Tao H."/>
            <person name="Yang X."/>
            <person name="Li Y."/>
            <person name="Jiang L."/>
            <person name="Liang S."/>
        </authorList>
    </citation>
    <scope>NUCLEOTIDE SEQUENCE [LARGE SCALE MRNA]</scope>
    <source>
        <tissue>Venom gland</tissue>
    </source>
</reference>
<comment type="subcellular location">
    <subcellularLocation>
        <location evidence="1">Secreted</location>
    </subcellularLocation>
</comment>
<comment type="tissue specificity">
    <text>Expressed by the venom gland.</text>
</comment>
<comment type="similarity">
    <text evidence="4">Belongs to the AVIT (prokineticin) family.</text>
</comment>
<feature type="signal peptide" evidence="3">
    <location>
        <begin position="1"/>
        <end position="21"/>
    </location>
</feature>
<feature type="chain" id="PRO_0000400855" description="U8-theraphotoxin-Hhn1g">
    <location>
        <begin position="22"/>
        <end position="84"/>
    </location>
</feature>
<feature type="disulfide bond" evidence="2">
    <location>
        <begin position="23"/>
        <end position="35"/>
    </location>
</feature>
<feature type="disulfide bond" evidence="2">
    <location>
        <begin position="29"/>
        <end position="44"/>
    </location>
</feature>
<feature type="disulfide bond" evidence="2">
    <location>
        <begin position="34"/>
        <end position="67"/>
    </location>
</feature>
<feature type="disulfide bond" evidence="2">
    <location>
        <begin position="54"/>
        <end position="75"/>
    </location>
</feature>
<feature type="disulfide bond" evidence="2">
    <location>
        <begin position="69"/>
        <end position="81"/>
    </location>
</feature>
<name>H14H1_CYRHA</name>
<proteinExistence type="evidence at transcript level"/>